<dbReference type="EMBL" id="CU207366">
    <property type="protein sequence ID" value="CAL68242.1"/>
    <property type="molecule type" value="Genomic_DNA"/>
</dbReference>
<dbReference type="RefSeq" id="WP_011711143.1">
    <property type="nucleotide sequence ID" value="NC_008571.1"/>
</dbReference>
<dbReference type="SMR" id="A0M6J7"/>
<dbReference type="STRING" id="411154.GFO_3299"/>
<dbReference type="KEGG" id="gfo:GFO_3299"/>
<dbReference type="eggNOG" id="COG0445">
    <property type="taxonomic scope" value="Bacteria"/>
</dbReference>
<dbReference type="HOGENOM" id="CLU_007831_2_2_10"/>
<dbReference type="OrthoDB" id="9815560at2"/>
<dbReference type="Proteomes" id="UP000000755">
    <property type="component" value="Chromosome"/>
</dbReference>
<dbReference type="GO" id="GO:0005829">
    <property type="term" value="C:cytosol"/>
    <property type="evidence" value="ECO:0007669"/>
    <property type="project" value="TreeGrafter"/>
</dbReference>
<dbReference type="GO" id="GO:0050660">
    <property type="term" value="F:flavin adenine dinucleotide binding"/>
    <property type="evidence" value="ECO:0007669"/>
    <property type="project" value="UniProtKB-UniRule"/>
</dbReference>
<dbReference type="GO" id="GO:0030488">
    <property type="term" value="P:tRNA methylation"/>
    <property type="evidence" value="ECO:0007669"/>
    <property type="project" value="TreeGrafter"/>
</dbReference>
<dbReference type="GO" id="GO:0002098">
    <property type="term" value="P:tRNA wobble uridine modification"/>
    <property type="evidence" value="ECO:0007669"/>
    <property type="project" value="InterPro"/>
</dbReference>
<dbReference type="FunFam" id="1.10.150.570:FF:000001">
    <property type="entry name" value="tRNA uridine 5-carboxymethylaminomethyl modification enzyme MnmG"/>
    <property type="match status" value="1"/>
</dbReference>
<dbReference type="FunFam" id="3.50.50.60:FF:000002">
    <property type="entry name" value="tRNA uridine 5-carboxymethylaminomethyl modification enzyme MnmG"/>
    <property type="match status" value="1"/>
</dbReference>
<dbReference type="Gene3D" id="3.50.50.60">
    <property type="entry name" value="FAD/NAD(P)-binding domain"/>
    <property type="match status" value="2"/>
</dbReference>
<dbReference type="Gene3D" id="1.10.150.570">
    <property type="entry name" value="GidA associated domain, C-terminal subdomain"/>
    <property type="match status" value="1"/>
</dbReference>
<dbReference type="Gene3D" id="1.10.10.1800">
    <property type="entry name" value="tRNA uridine 5-carboxymethylaminomethyl modification enzyme MnmG/GidA"/>
    <property type="match status" value="1"/>
</dbReference>
<dbReference type="HAMAP" id="MF_00129">
    <property type="entry name" value="MnmG_GidA"/>
    <property type="match status" value="1"/>
</dbReference>
<dbReference type="InterPro" id="IPR036188">
    <property type="entry name" value="FAD/NAD-bd_sf"/>
</dbReference>
<dbReference type="InterPro" id="IPR049312">
    <property type="entry name" value="GIDA_C_N"/>
</dbReference>
<dbReference type="InterPro" id="IPR004416">
    <property type="entry name" value="MnmG"/>
</dbReference>
<dbReference type="InterPro" id="IPR002218">
    <property type="entry name" value="MnmG-rel"/>
</dbReference>
<dbReference type="InterPro" id="IPR020595">
    <property type="entry name" value="MnmG-rel_CS"/>
</dbReference>
<dbReference type="InterPro" id="IPR026904">
    <property type="entry name" value="MnmG_C"/>
</dbReference>
<dbReference type="InterPro" id="IPR047001">
    <property type="entry name" value="MnmG_C_subdom"/>
</dbReference>
<dbReference type="InterPro" id="IPR044920">
    <property type="entry name" value="MnmG_C_subdom_sf"/>
</dbReference>
<dbReference type="InterPro" id="IPR040131">
    <property type="entry name" value="MnmG_N"/>
</dbReference>
<dbReference type="NCBIfam" id="TIGR00136">
    <property type="entry name" value="mnmG_gidA"/>
    <property type="match status" value="1"/>
</dbReference>
<dbReference type="PANTHER" id="PTHR11806">
    <property type="entry name" value="GLUCOSE INHIBITED DIVISION PROTEIN A"/>
    <property type="match status" value="1"/>
</dbReference>
<dbReference type="PANTHER" id="PTHR11806:SF0">
    <property type="entry name" value="PROTEIN MTO1 HOMOLOG, MITOCHONDRIAL"/>
    <property type="match status" value="1"/>
</dbReference>
<dbReference type="Pfam" id="PF01134">
    <property type="entry name" value="GIDA"/>
    <property type="match status" value="1"/>
</dbReference>
<dbReference type="Pfam" id="PF21680">
    <property type="entry name" value="GIDA_C_1st"/>
    <property type="match status" value="1"/>
</dbReference>
<dbReference type="Pfam" id="PF13932">
    <property type="entry name" value="SAM_GIDA_C"/>
    <property type="match status" value="1"/>
</dbReference>
<dbReference type="SMART" id="SM01228">
    <property type="entry name" value="GIDA_assoc_3"/>
    <property type="match status" value="1"/>
</dbReference>
<dbReference type="SUPFAM" id="SSF51905">
    <property type="entry name" value="FAD/NAD(P)-binding domain"/>
    <property type="match status" value="1"/>
</dbReference>
<dbReference type="PROSITE" id="PS01280">
    <property type="entry name" value="GIDA_1"/>
    <property type="match status" value="1"/>
</dbReference>
<dbReference type="PROSITE" id="PS01281">
    <property type="entry name" value="GIDA_2"/>
    <property type="match status" value="1"/>
</dbReference>
<protein>
    <recommendedName>
        <fullName evidence="1">tRNA uridine 5-carboxymethylaminomethyl modification enzyme MnmG</fullName>
    </recommendedName>
    <alternativeName>
        <fullName evidence="1">Glucose-inhibited division protein A</fullName>
    </alternativeName>
</protein>
<comment type="function">
    <text evidence="1">NAD-binding protein involved in the addition of a carboxymethylaminomethyl (cmnm) group at the wobble position (U34) of certain tRNAs, forming tRNA-cmnm(5)s(2)U34.</text>
</comment>
<comment type="cofactor">
    <cofactor evidence="1">
        <name>FAD</name>
        <dbReference type="ChEBI" id="CHEBI:57692"/>
    </cofactor>
</comment>
<comment type="subunit">
    <text evidence="1">Homodimer. Heterotetramer of two MnmE and two MnmG subunits.</text>
</comment>
<comment type="subcellular location">
    <subcellularLocation>
        <location evidence="1">Cytoplasm</location>
    </subcellularLocation>
</comment>
<comment type="similarity">
    <text evidence="1">Belongs to the MnmG family.</text>
</comment>
<proteinExistence type="inferred from homology"/>
<name>MNMG_CHRFK</name>
<evidence type="ECO:0000255" key="1">
    <source>
        <dbReference type="HAMAP-Rule" id="MF_00129"/>
    </source>
</evidence>
<gene>
    <name evidence="1" type="primary">mnmG</name>
    <name evidence="1" type="synonym">gidA</name>
    <name type="ordered locus">GFO_3299</name>
</gene>
<feature type="chain" id="PRO_0000345277" description="tRNA uridine 5-carboxymethylaminomethyl modification enzyme MnmG">
    <location>
        <begin position="1"/>
        <end position="623"/>
    </location>
</feature>
<feature type="binding site" evidence="1">
    <location>
        <begin position="12"/>
        <end position="17"/>
    </location>
    <ligand>
        <name>FAD</name>
        <dbReference type="ChEBI" id="CHEBI:57692"/>
    </ligand>
</feature>
<feature type="binding site" evidence="1">
    <location>
        <begin position="272"/>
        <end position="286"/>
    </location>
    <ligand>
        <name>NAD(+)</name>
        <dbReference type="ChEBI" id="CHEBI:57540"/>
    </ligand>
</feature>
<accession>A0M6J7</accession>
<sequence length="623" mass="70041">MFEKQYDVIVVGAGHAGSEAAAAAANMGSKTLLITMNLQNIAQMSCNPAMGGIAKGQIVREIDAMGGYSGIVSDTSAIQFKMLNKSKGPAMWSPRVQSDRMRFAEDWRLKLEGTPNLDFYQEMVAGLIIENDKVIGVRTSLGLEVFAKSVVCTNGTFLNGLIHIGDKQFGGGRAGERAATGITKDLIEVGFEAGRMKTGTPPRVDGRSLDYSKMTEQPGDDIPGKFSYSDETKPLSKQRSCHMTYTSNEVHDILKEGFDRSPMFNGRIQSIGPRYCPSIEDKINRFADKDRHQLFVEPEGWNTVEVYVNGFSTSLPEDVQFKALRSVAGFENVKFFRPGYAIEYDYFPPTQLKHTLETKLVEGLYFAGQINGTTGYEEAACQGMMAGINAALKVQEKDEFILKRNEAYIGVLIDDLITKGTEEPYRMFTSRAEYRTLLRQDNADFRLTERSYNLGLASEKRMRKMEEKKDKSLKFVQYLKDLSVVPEEANPVLEKRNSSPMKQSDKVFKVFSRPQITMEDVKNFSGVEEFISENELNEEMIEQTEIQVKYSGYIEKEKNNADKLNRLEDMKIPKNFDYSNIKSMSYEAREKLKKVQPATVSQASRISGVSPNDISVLLVYMGR</sequence>
<reference key="1">
    <citation type="journal article" date="2006" name="Environ. Microbiol.">
        <title>Whole genome analysis of the marine Bacteroidetes'Gramella forsetii' reveals adaptations to degradation of polymeric organic matter.</title>
        <authorList>
            <person name="Bauer M."/>
            <person name="Kube M."/>
            <person name="Teeling H."/>
            <person name="Richter M."/>
            <person name="Lombardot T."/>
            <person name="Allers E."/>
            <person name="Wuerdemann C.A."/>
            <person name="Quast C."/>
            <person name="Kuhl H."/>
            <person name="Knaust F."/>
            <person name="Woebken D."/>
            <person name="Bischof K."/>
            <person name="Mussmann M."/>
            <person name="Choudhuri J.V."/>
            <person name="Meyer F."/>
            <person name="Reinhardt R."/>
            <person name="Amann R.I."/>
            <person name="Gloeckner F.O."/>
        </authorList>
    </citation>
    <scope>NUCLEOTIDE SEQUENCE [LARGE SCALE GENOMIC DNA]</scope>
    <source>
        <strain>DSM 17595 / CGMCC 1.15422 / KT0803</strain>
    </source>
</reference>
<organism>
    <name type="scientific">Christiangramia forsetii (strain DSM 17595 / CGMCC 1.15422 / KT0803)</name>
    <name type="common">Gramella forsetii</name>
    <dbReference type="NCBI Taxonomy" id="411154"/>
    <lineage>
        <taxon>Bacteria</taxon>
        <taxon>Pseudomonadati</taxon>
        <taxon>Bacteroidota</taxon>
        <taxon>Flavobacteriia</taxon>
        <taxon>Flavobacteriales</taxon>
        <taxon>Flavobacteriaceae</taxon>
        <taxon>Christiangramia</taxon>
    </lineage>
</organism>
<keyword id="KW-0963">Cytoplasm</keyword>
<keyword id="KW-0274">FAD</keyword>
<keyword id="KW-0285">Flavoprotein</keyword>
<keyword id="KW-0520">NAD</keyword>
<keyword id="KW-0819">tRNA processing</keyword>